<keyword id="KW-0044">Antibiotic</keyword>
<keyword id="KW-0929">Antimicrobial</keyword>
<keyword id="KW-0204">Cytolysis</keyword>
<keyword id="KW-0903">Direct protein sequencing</keyword>
<keyword id="KW-0354">Hemolysis</keyword>
<keyword id="KW-0964">Secreted</keyword>
<keyword id="KW-0800">Toxin</keyword>
<reference key="1">
    <citation type="journal article" date="2002" name="J. Biol. Chem.">
        <title>Oxyopinins, large amphipathic peptides isolated from the venom of the wolf spider Oxyopes kitabensis with cytolytic properties and positive insecticidal cooperativity with spider neurotoxins.</title>
        <authorList>
            <person name="Corzo G."/>
            <person name="Villegas E."/>
            <person name="Gomez-Lagunas F."/>
            <person name="Possani L.D."/>
            <person name="Belokoneva O.S."/>
            <person name="Nakajima T."/>
        </authorList>
    </citation>
    <scope>PROTEIN SEQUENCE</scope>
    <scope>FUNCTION</scope>
    <scope>TISSUE SPECIFICITY</scope>
    <scope>SUBCELLULAR LOCATION</scope>
    <scope>MASS SPECTROMETRY</scope>
    <scope>CIRCULAR DICHROISM ANALYSIS</scope>
    <source>
        <tissue>Venom</tissue>
    </source>
</reference>
<sequence length="37" mass="4147">GKFSGFAKILKSIAKFFKGVGKVRKQFKEASDLDKNQ</sequence>
<name>TOP2B_OXYTA</name>
<comment type="function">
    <text evidence="1">Disrupts biological membranes, particularly those rich in phosphocholine. Has antimicrobial activity against Gram-negative bacterium E.coli, Gram-positive bacteria B.subtilis and S.aureus, and hemolytic activity against sheep, pig and guinea pig red blood cells. Has insecticidal activity against S.frugiperda ovarian cells by opening non-selective ion channels. Enhances the insecticidal activity of spider venom neurotoxic peptides.</text>
</comment>
<comment type="subcellular location">
    <subcellularLocation>
        <location evidence="1">Secreted</location>
    </subcellularLocation>
</comment>
<comment type="tissue specificity">
    <text evidence="1">Expressed by the venom gland.</text>
</comment>
<comment type="mass spectrometry" mass="4146.9" method="MALDI" evidence="1"/>
<comment type="similarity">
    <text evidence="2">Belongs to the cationic peptide 02 (oxyopinin-2) family.</text>
</comment>
<dbReference type="SMR" id="P83249"/>
<dbReference type="ArachnoServer" id="AS000187">
    <property type="toxin name" value="M-oxotoxin-Ot2b"/>
</dbReference>
<dbReference type="GO" id="GO:0005576">
    <property type="term" value="C:extracellular region"/>
    <property type="evidence" value="ECO:0007669"/>
    <property type="project" value="UniProtKB-SubCell"/>
</dbReference>
<dbReference type="GO" id="GO:0090729">
    <property type="term" value="F:toxin activity"/>
    <property type="evidence" value="ECO:0007669"/>
    <property type="project" value="UniProtKB-KW"/>
</dbReference>
<dbReference type="GO" id="GO:0042742">
    <property type="term" value="P:defense response to bacterium"/>
    <property type="evidence" value="ECO:0007669"/>
    <property type="project" value="UniProtKB-KW"/>
</dbReference>
<dbReference type="GO" id="GO:0019836">
    <property type="term" value="P:symbiont-mediated hemolysis of host erythrocyte"/>
    <property type="evidence" value="ECO:0007669"/>
    <property type="project" value="InterPro"/>
</dbReference>
<dbReference type="InterPro" id="IPR012522">
    <property type="entry name" value="Antimicrobial_3"/>
</dbReference>
<dbReference type="Pfam" id="PF08025">
    <property type="entry name" value="Antimicrobial_3"/>
    <property type="match status" value="1"/>
</dbReference>
<organism>
    <name type="scientific">Oxyopes takobius</name>
    <name type="common">Lynx spider</name>
    <name type="synonym">Oxyopes foliiformis</name>
    <dbReference type="NCBI Taxonomy" id="666126"/>
    <lineage>
        <taxon>Eukaryota</taxon>
        <taxon>Metazoa</taxon>
        <taxon>Ecdysozoa</taxon>
        <taxon>Arthropoda</taxon>
        <taxon>Chelicerata</taxon>
        <taxon>Arachnida</taxon>
        <taxon>Araneae</taxon>
        <taxon>Araneomorphae</taxon>
        <taxon>Entelegynae</taxon>
        <taxon>Lycosoidea</taxon>
        <taxon>Oxyopidae</taxon>
        <taxon>Oxyopes</taxon>
    </lineage>
</organism>
<accession>P83249</accession>
<protein>
    <recommendedName>
        <fullName>M-oxotoxin-Ot2b</fullName>
        <shortName>M-OXTX-Ot2b</shortName>
    </recommendedName>
    <alternativeName>
        <fullName>Oxki2b</fullName>
    </alternativeName>
    <alternativeName>
        <fullName>Oxyopinin-2b</fullName>
    </alternativeName>
</protein>
<feature type="peptide" id="PRO_0000045032" description="M-oxotoxin-Ot2b">
    <location>
        <begin position="1"/>
        <end position="37"/>
    </location>
</feature>
<proteinExistence type="evidence at protein level"/>
<evidence type="ECO:0000269" key="1">
    <source>
    </source>
</evidence>
<evidence type="ECO:0000305" key="2"/>